<organism>
    <name type="scientific">Bartonella bacilliformis (strain ATCC 35685 / KC583 / Herrer 020/F12,63)</name>
    <dbReference type="NCBI Taxonomy" id="360095"/>
    <lineage>
        <taxon>Bacteria</taxon>
        <taxon>Pseudomonadati</taxon>
        <taxon>Pseudomonadota</taxon>
        <taxon>Alphaproteobacteria</taxon>
        <taxon>Hyphomicrobiales</taxon>
        <taxon>Bartonellaceae</taxon>
        <taxon>Bartonella</taxon>
    </lineage>
</organism>
<protein>
    <recommendedName>
        <fullName evidence="1">Arginine--tRNA ligase</fullName>
        <ecNumber evidence="1">6.1.1.19</ecNumber>
    </recommendedName>
    <alternativeName>
        <fullName evidence="1">Arginyl-tRNA synthetase</fullName>
        <shortName evidence="1">ArgRS</shortName>
    </alternativeName>
</protein>
<sequence length="585" mass="66254">MNVFKNFEQKIKKSLKESDIKGKNGENLDLSKITVDPPRDSLHGDLSTNASMVLAKSVGLNPRTLAEKIIALLKDDPSIDHLEVAGSGFINIKLTKSFWHDVLKLMITSGTDYGRTQIGQGKQVNVEYVSANPTGPMHVGHCRGAVVGDVLANLLQFAGYNVTKEYYINDAGKQIEILAASVLLRYREALGETINKIPEGLYPGEYLIPLGQSLVQEFGDKLLTMDNEKALSIVKERSIDAMMTMIRQDLATLNIHHDVFFSERMLYMNNAQAIRNTINDLTLNGYVYKGKLSPPKGQTLEDWEPHEQTLFRSTDVGDDQDRVLIKSDGSYTYFAADVAYFRDKFHRHFDEMIYVLGADHAGYVKRLEAVAKAISGNKAKLTAFLCQLVKLFRNGHPVRMSKREGSFITLRDVVKEVGRDPVRFMMLYRKCEAPLDFDLEKVTEQSKDNPIFYVQYAHARCHSVFRQAQENLQIENPSNDLMIAHLDQLTNDSEISLIHKLAQYPRIIEQAIVYKEPHRLAFYLYDLASNFHGHWNKGNDNPELRFIKPNNKKLSLARLGLVQAFINVLSSGLKIVEVKAPTEMR</sequence>
<dbReference type="EC" id="6.1.1.19" evidence="1"/>
<dbReference type="EMBL" id="CP000524">
    <property type="protein sequence ID" value="ABM44962.1"/>
    <property type="molecule type" value="Genomic_DNA"/>
</dbReference>
<dbReference type="RefSeq" id="WP_005767024.1">
    <property type="nucleotide sequence ID" value="NC_008783.1"/>
</dbReference>
<dbReference type="SMR" id="A1USU3"/>
<dbReference type="STRING" id="360095.BARBAKC583_0749"/>
<dbReference type="GeneID" id="4684762"/>
<dbReference type="KEGG" id="bbk:BARBAKC583_0749"/>
<dbReference type="PATRIC" id="fig|360095.6.peg.727"/>
<dbReference type="eggNOG" id="COG0018">
    <property type="taxonomic scope" value="Bacteria"/>
</dbReference>
<dbReference type="HOGENOM" id="CLU_006406_0_1_5"/>
<dbReference type="OrthoDB" id="9803211at2"/>
<dbReference type="Proteomes" id="UP000000643">
    <property type="component" value="Chromosome"/>
</dbReference>
<dbReference type="GO" id="GO:0005737">
    <property type="term" value="C:cytoplasm"/>
    <property type="evidence" value="ECO:0007669"/>
    <property type="project" value="UniProtKB-SubCell"/>
</dbReference>
<dbReference type="GO" id="GO:0004814">
    <property type="term" value="F:arginine-tRNA ligase activity"/>
    <property type="evidence" value="ECO:0007669"/>
    <property type="project" value="UniProtKB-UniRule"/>
</dbReference>
<dbReference type="GO" id="GO:0005524">
    <property type="term" value="F:ATP binding"/>
    <property type="evidence" value="ECO:0007669"/>
    <property type="project" value="UniProtKB-UniRule"/>
</dbReference>
<dbReference type="GO" id="GO:0006420">
    <property type="term" value="P:arginyl-tRNA aminoacylation"/>
    <property type="evidence" value="ECO:0007669"/>
    <property type="project" value="UniProtKB-UniRule"/>
</dbReference>
<dbReference type="CDD" id="cd00671">
    <property type="entry name" value="ArgRS_core"/>
    <property type="match status" value="1"/>
</dbReference>
<dbReference type="FunFam" id="3.40.50.620:FF:000062">
    <property type="entry name" value="Arginine--tRNA ligase"/>
    <property type="match status" value="1"/>
</dbReference>
<dbReference type="Gene3D" id="3.30.1360.70">
    <property type="entry name" value="Arginyl tRNA synthetase N-terminal domain"/>
    <property type="match status" value="1"/>
</dbReference>
<dbReference type="Gene3D" id="3.40.50.620">
    <property type="entry name" value="HUPs"/>
    <property type="match status" value="1"/>
</dbReference>
<dbReference type="Gene3D" id="1.10.730.10">
    <property type="entry name" value="Isoleucyl-tRNA Synthetase, Domain 1"/>
    <property type="match status" value="1"/>
</dbReference>
<dbReference type="HAMAP" id="MF_00123">
    <property type="entry name" value="Arg_tRNA_synth"/>
    <property type="match status" value="1"/>
</dbReference>
<dbReference type="InterPro" id="IPR001412">
    <property type="entry name" value="aa-tRNA-synth_I_CS"/>
</dbReference>
<dbReference type="InterPro" id="IPR001278">
    <property type="entry name" value="Arg-tRNA-ligase"/>
</dbReference>
<dbReference type="InterPro" id="IPR005148">
    <property type="entry name" value="Arg-tRNA-synth_N"/>
</dbReference>
<dbReference type="InterPro" id="IPR036695">
    <property type="entry name" value="Arg-tRNA-synth_N_sf"/>
</dbReference>
<dbReference type="InterPro" id="IPR035684">
    <property type="entry name" value="ArgRS_core"/>
</dbReference>
<dbReference type="InterPro" id="IPR008909">
    <property type="entry name" value="DALR_anticod-bd"/>
</dbReference>
<dbReference type="InterPro" id="IPR014729">
    <property type="entry name" value="Rossmann-like_a/b/a_fold"/>
</dbReference>
<dbReference type="InterPro" id="IPR009080">
    <property type="entry name" value="tRNAsynth_Ia_anticodon-bd"/>
</dbReference>
<dbReference type="NCBIfam" id="TIGR00456">
    <property type="entry name" value="argS"/>
    <property type="match status" value="1"/>
</dbReference>
<dbReference type="PANTHER" id="PTHR11956:SF5">
    <property type="entry name" value="ARGININE--TRNA LIGASE, CYTOPLASMIC"/>
    <property type="match status" value="1"/>
</dbReference>
<dbReference type="PANTHER" id="PTHR11956">
    <property type="entry name" value="ARGINYL-TRNA SYNTHETASE"/>
    <property type="match status" value="1"/>
</dbReference>
<dbReference type="Pfam" id="PF03485">
    <property type="entry name" value="Arg_tRNA_synt_N"/>
    <property type="match status" value="1"/>
</dbReference>
<dbReference type="Pfam" id="PF05746">
    <property type="entry name" value="DALR_1"/>
    <property type="match status" value="1"/>
</dbReference>
<dbReference type="Pfam" id="PF00750">
    <property type="entry name" value="tRNA-synt_1d"/>
    <property type="match status" value="1"/>
</dbReference>
<dbReference type="PRINTS" id="PR01038">
    <property type="entry name" value="TRNASYNTHARG"/>
</dbReference>
<dbReference type="SMART" id="SM01016">
    <property type="entry name" value="Arg_tRNA_synt_N"/>
    <property type="match status" value="1"/>
</dbReference>
<dbReference type="SMART" id="SM00836">
    <property type="entry name" value="DALR_1"/>
    <property type="match status" value="1"/>
</dbReference>
<dbReference type="SUPFAM" id="SSF47323">
    <property type="entry name" value="Anticodon-binding domain of a subclass of class I aminoacyl-tRNA synthetases"/>
    <property type="match status" value="1"/>
</dbReference>
<dbReference type="SUPFAM" id="SSF55190">
    <property type="entry name" value="Arginyl-tRNA synthetase (ArgRS), N-terminal 'additional' domain"/>
    <property type="match status" value="1"/>
</dbReference>
<dbReference type="SUPFAM" id="SSF52374">
    <property type="entry name" value="Nucleotidylyl transferase"/>
    <property type="match status" value="1"/>
</dbReference>
<dbReference type="PROSITE" id="PS00178">
    <property type="entry name" value="AA_TRNA_LIGASE_I"/>
    <property type="match status" value="1"/>
</dbReference>
<keyword id="KW-0030">Aminoacyl-tRNA synthetase</keyword>
<keyword id="KW-0067">ATP-binding</keyword>
<keyword id="KW-0963">Cytoplasm</keyword>
<keyword id="KW-0436">Ligase</keyword>
<keyword id="KW-0547">Nucleotide-binding</keyword>
<keyword id="KW-0648">Protein biosynthesis</keyword>
<proteinExistence type="inferred from homology"/>
<comment type="catalytic activity">
    <reaction evidence="1">
        <text>tRNA(Arg) + L-arginine + ATP = L-arginyl-tRNA(Arg) + AMP + diphosphate</text>
        <dbReference type="Rhea" id="RHEA:20301"/>
        <dbReference type="Rhea" id="RHEA-COMP:9658"/>
        <dbReference type="Rhea" id="RHEA-COMP:9673"/>
        <dbReference type="ChEBI" id="CHEBI:30616"/>
        <dbReference type="ChEBI" id="CHEBI:32682"/>
        <dbReference type="ChEBI" id="CHEBI:33019"/>
        <dbReference type="ChEBI" id="CHEBI:78442"/>
        <dbReference type="ChEBI" id="CHEBI:78513"/>
        <dbReference type="ChEBI" id="CHEBI:456215"/>
        <dbReference type="EC" id="6.1.1.19"/>
    </reaction>
</comment>
<comment type="subunit">
    <text evidence="1">Monomer.</text>
</comment>
<comment type="subcellular location">
    <subcellularLocation>
        <location evidence="1">Cytoplasm</location>
    </subcellularLocation>
</comment>
<comment type="similarity">
    <text evidence="1">Belongs to the class-I aminoacyl-tRNA synthetase family.</text>
</comment>
<feature type="chain" id="PRO_1000017989" description="Arginine--tRNA ligase">
    <location>
        <begin position="1"/>
        <end position="585"/>
    </location>
</feature>
<feature type="short sequence motif" description="'HIGH' region">
    <location>
        <begin position="131"/>
        <end position="141"/>
    </location>
</feature>
<gene>
    <name evidence="1" type="primary">argS</name>
    <name type="ordered locus">BARBAKC583_0749</name>
</gene>
<evidence type="ECO:0000255" key="1">
    <source>
        <dbReference type="HAMAP-Rule" id="MF_00123"/>
    </source>
</evidence>
<reference key="1">
    <citation type="submission" date="2006-12" db="EMBL/GenBank/DDBJ databases">
        <authorList>
            <person name="Hendrix L."/>
            <person name="Mohamoud Y."/>
            <person name="Radune D."/>
            <person name="Shvartsbeyn A."/>
            <person name="Daugherty S."/>
            <person name="Dodson R."/>
            <person name="Durkin A.S."/>
            <person name="Harkins D."/>
            <person name="Huot H."/>
            <person name="Kothari S.P."/>
            <person name="Madupu R."/>
            <person name="Li J."/>
            <person name="Nelson W.C."/>
            <person name="Shrivastava S."/>
            <person name="Giglio M.G."/>
            <person name="Haft D."/>
            <person name="Selengut J."/>
            <person name="Fraser-Ligget C."/>
            <person name="Seshadri R."/>
        </authorList>
    </citation>
    <scope>NUCLEOTIDE SEQUENCE [LARGE SCALE GENOMIC DNA]</scope>
    <source>
        <strain>ATCC 35685 / KC583 / Herrer 020/F12,63</strain>
    </source>
</reference>
<accession>A1USU3</accession>
<name>SYR_BARBK</name>